<evidence type="ECO:0000255" key="1"/>
<evidence type="ECO:0000269" key="2">
    <source>
    </source>
</evidence>
<evidence type="ECO:0000303" key="3">
    <source>
    </source>
</evidence>
<evidence type="ECO:0000305" key="4"/>
<evidence type="ECO:0000305" key="5">
    <source>
    </source>
</evidence>
<evidence type="ECO:0000312" key="6">
    <source>
        <dbReference type="EMBL" id="UVC57623.1"/>
    </source>
</evidence>
<evidence type="ECO:0000312" key="7">
    <source>
        <dbReference type="PDB" id="7S7P"/>
    </source>
</evidence>
<evidence type="ECO:0007744" key="8">
    <source>
        <dbReference type="PDB" id="7S7P"/>
    </source>
</evidence>
<reference evidence="6 7" key="1">
    <citation type="journal article" date="2022" name="J. Biol. Chem.">
        <title>Neurotoxic and cytotoxic peptides underlie the painful stings of the tree nettle Urtica ferox.</title>
        <authorList>
            <person name="Xie J."/>
            <person name="Robinson S.D."/>
            <person name="Gilding E.K."/>
            <person name="Jami S."/>
            <person name="Deuis J.R."/>
            <person name="Rehm F.B.H."/>
            <person name="Yap K."/>
            <person name="Ragnarsson L."/>
            <person name="Chan L.Y."/>
            <person name="Hamilton B.R."/>
            <person name="Harvey P.J."/>
            <person name="Craik D.J."/>
            <person name="Vetter I."/>
            <person name="Durek T."/>
        </authorList>
    </citation>
    <scope>NUCLEOTIDE SEQUENCE [MRNA]</scope>
    <scope>STRUCTURE BY NMR OF 25-66</scope>
    <scope>FUNCTION</scope>
    <scope>TISSUE SPECIFICITY</scope>
    <scope>MASS SPECTROMETRY</scope>
    <scope>DISULFIDE BONDS</scope>
    <scope>SYNTHESIS OF 25-66</scope>
</reference>
<organism>
    <name type="scientific">Urtica ferox</name>
    <name type="common">Tree nettle</name>
    <dbReference type="NCBI Taxonomy" id="1435581"/>
    <lineage>
        <taxon>Eukaryota</taxon>
        <taxon>Viridiplantae</taxon>
        <taxon>Streptophyta</taxon>
        <taxon>Embryophyta</taxon>
        <taxon>Tracheophyta</taxon>
        <taxon>Spermatophyta</taxon>
        <taxon>Magnoliopsida</taxon>
        <taxon>eudicotyledons</taxon>
        <taxon>Gunneridae</taxon>
        <taxon>Pentapetalae</taxon>
        <taxon>rosids</taxon>
        <taxon>fabids</taxon>
        <taxon>Rosales</taxon>
        <taxon>Urticaceae</taxon>
        <taxon>Urtica</taxon>
    </lineage>
</organism>
<name>THN1A_URTFR</name>
<proteinExistence type="evidence at protein level"/>
<keyword id="KW-0002">3D-structure</keyword>
<keyword id="KW-0204">Cytolysis</keyword>
<keyword id="KW-1015">Disulfide bond</keyword>
<keyword id="KW-0611">Plant defense</keyword>
<keyword id="KW-0964">Secreted</keyword>
<keyword id="KW-0732">Signal</keyword>
<keyword id="KW-0800">Toxin</keyword>
<comment type="function">
    <text evidence="2">Plant defense protein that causes pain by probable disruption of cell membranes. Shows cytotoxic activity against the neuroblastoma cell line SH-SY5Y and slightly weaker activity against several non-neuronal cell lines. In vivo, intraplantar injection into mice causes several nocifensive responses, along with swelling and redness.</text>
</comment>
<comment type="subcellular location">
    <subcellularLocation>
        <location evidence="5">Secreted</location>
    </subcellularLocation>
</comment>
<comment type="tissue specificity">
    <text evidence="2">Expressed in trichomes, that are stiff epidermal hairs located on the surface of petioles and leaves.</text>
</comment>
<comment type="mass spectrometry" mass="4364.06" method="MALDI" evidence="2">
    <molecule>DELTA-urthionin-Uf1a</molecule>
    <text>Monoisotopic mass.</text>
</comment>
<comment type="similarity">
    <text evidence="4">Belongs to the plant thionin (TC 1.C.44) family.</text>
</comment>
<protein>
    <recommendedName>
        <fullName evidence="3">DELTA-urthionin-Uf1a</fullName>
        <shortName evidence="3">DELTA-URTH-Uf1a</shortName>
        <shortName evidence="3">DELTA-Uf1a</shortName>
    </recommendedName>
</protein>
<accession>A0A976SLN7</accession>
<accession>A0A9J4RF35</accession>
<feature type="signal peptide" evidence="1">
    <location>
        <begin position="1"/>
        <end position="24"/>
    </location>
</feature>
<feature type="chain" id="PRO_5037340171" description="DELTA-urthionin-Uf1a" evidence="2">
    <location>
        <begin position="25"/>
        <end position="66"/>
    </location>
</feature>
<feature type="propeptide" id="PRO_0000459426" description="Acidic domain" evidence="4">
    <location>
        <begin position="67"/>
        <end position="128"/>
    </location>
</feature>
<feature type="disulfide bond" evidence="2 8">
    <location>
        <begin position="27"/>
        <end position="64"/>
    </location>
</feature>
<feature type="disulfide bond" evidence="2 8">
    <location>
        <begin position="28"/>
        <end position="56"/>
    </location>
</feature>
<feature type="disulfide bond" evidence="2 8">
    <location>
        <begin position="40"/>
        <end position="50"/>
    </location>
</feature>
<dbReference type="EMBL" id="OK376605">
    <property type="protein sequence ID" value="UVC57623.1"/>
    <property type="molecule type" value="mRNA"/>
</dbReference>
<dbReference type="PDB" id="7S7P">
    <property type="method" value="NMR"/>
    <property type="chains" value="A=25-66"/>
</dbReference>
<dbReference type="PDBsum" id="7S7P"/>
<dbReference type="SMR" id="A0A976SLN7"/>
<dbReference type="GO" id="GO:0005576">
    <property type="term" value="C:extracellular region"/>
    <property type="evidence" value="ECO:0007669"/>
    <property type="project" value="UniProtKB-SubCell"/>
</dbReference>
<dbReference type="GO" id="GO:0090729">
    <property type="term" value="F:toxin activity"/>
    <property type="evidence" value="ECO:0007669"/>
    <property type="project" value="UniProtKB-KW"/>
</dbReference>
<dbReference type="GO" id="GO:0006952">
    <property type="term" value="P:defense response"/>
    <property type="evidence" value="ECO:0007669"/>
    <property type="project" value="UniProtKB-KW"/>
</dbReference>
<dbReference type="GO" id="GO:0031640">
    <property type="term" value="P:killing of cells of another organism"/>
    <property type="evidence" value="ECO:0007669"/>
    <property type="project" value="UniProtKB-KW"/>
</dbReference>
<dbReference type="FunFam" id="3.30.1350.10:FF:000001">
    <property type="entry name" value="Hellethionin-D"/>
    <property type="match status" value="1"/>
</dbReference>
<dbReference type="Gene3D" id="3.30.1350.10">
    <property type="entry name" value="Thionin-like"/>
    <property type="match status" value="1"/>
</dbReference>
<dbReference type="InterPro" id="IPR001010">
    <property type="entry name" value="Thionin"/>
</dbReference>
<dbReference type="InterPro" id="IPR036391">
    <property type="entry name" value="Thionin-like_sf"/>
</dbReference>
<dbReference type="PANTHER" id="PTHR33920">
    <property type="entry name" value="THIONIN-2.1-RELATED"/>
    <property type="match status" value="1"/>
</dbReference>
<dbReference type="PANTHER" id="PTHR33920:SF2">
    <property type="entry name" value="THIONIN-2.1-RELATED"/>
    <property type="match status" value="1"/>
</dbReference>
<dbReference type="Pfam" id="PF00321">
    <property type="entry name" value="Thionin"/>
    <property type="match status" value="1"/>
</dbReference>
<dbReference type="PRINTS" id="PR00287">
    <property type="entry name" value="THIONIN"/>
</dbReference>
<dbReference type="SUPFAM" id="SSF57429">
    <property type="entry name" value="Crambin-like"/>
    <property type="match status" value="1"/>
</dbReference>
<dbReference type="PROSITE" id="PS00271">
    <property type="entry name" value="THIONIN"/>
    <property type="match status" value="1"/>
</dbReference>
<sequence length="128" mass="13406">MEGKTVIVSLLLLSIVVGQIQVEAKSCCPSTTARNIYNTCRFGGGSRTLCAKLSGCKIVSGTTCPKLSIPEVTGEAVNEYCKLGCSFSVCRAITTLQNTDAGEVLNEAAEKCNNACSTLCTKNSIETA</sequence>